<proteinExistence type="inferred from homology"/>
<reference key="1">
    <citation type="journal article" date="2002" name="Nature">
        <title>The genome sequence of Schizosaccharomyces pombe.</title>
        <authorList>
            <person name="Wood V."/>
            <person name="Gwilliam R."/>
            <person name="Rajandream M.A."/>
            <person name="Lyne M.H."/>
            <person name="Lyne R."/>
            <person name="Stewart A."/>
            <person name="Sgouros J.G."/>
            <person name="Peat N."/>
            <person name="Hayles J."/>
            <person name="Baker S.G."/>
            <person name="Basham D."/>
            <person name="Bowman S."/>
            <person name="Brooks K."/>
            <person name="Brown D."/>
            <person name="Brown S."/>
            <person name="Chillingworth T."/>
            <person name="Churcher C.M."/>
            <person name="Collins M."/>
            <person name="Connor R."/>
            <person name="Cronin A."/>
            <person name="Davis P."/>
            <person name="Feltwell T."/>
            <person name="Fraser A."/>
            <person name="Gentles S."/>
            <person name="Goble A."/>
            <person name="Hamlin N."/>
            <person name="Harris D.E."/>
            <person name="Hidalgo J."/>
            <person name="Hodgson G."/>
            <person name="Holroyd S."/>
            <person name="Hornsby T."/>
            <person name="Howarth S."/>
            <person name="Huckle E.J."/>
            <person name="Hunt S."/>
            <person name="Jagels K."/>
            <person name="James K.D."/>
            <person name="Jones L."/>
            <person name="Jones M."/>
            <person name="Leather S."/>
            <person name="McDonald S."/>
            <person name="McLean J."/>
            <person name="Mooney P."/>
            <person name="Moule S."/>
            <person name="Mungall K.L."/>
            <person name="Murphy L.D."/>
            <person name="Niblett D."/>
            <person name="Odell C."/>
            <person name="Oliver K."/>
            <person name="O'Neil S."/>
            <person name="Pearson D."/>
            <person name="Quail M.A."/>
            <person name="Rabbinowitsch E."/>
            <person name="Rutherford K.M."/>
            <person name="Rutter S."/>
            <person name="Saunders D."/>
            <person name="Seeger K."/>
            <person name="Sharp S."/>
            <person name="Skelton J."/>
            <person name="Simmonds M.N."/>
            <person name="Squares R."/>
            <person name="Squares S."/>
            <person name="Stevens K."/>
            <person name="Taylor K."/>
            <person name="Taylor R.G."/>
            <person name="Tivey A."/>
            <person name="Walsh S.V."/>
            <person name="Warren T."/>
            <person name="Whitehead S."/>
            <person name="Woodward J.R."/>
            <person name="Volckaert G."/>
            <person name="Aert R."/>
            <person name="Robben J."/>
            <person name="Grymonprez B."/>
            <person name="Weltjens I."/>
            <person name="Vanstreels E."/>
            <person name="Rieger M."/>
            <person name="Schaefer M."/>
            <person name="Mueller-Auer S."/>
            <person name="Gabel C."/>
            <person name="Fuchs M."/>
            <person name="Duesterhoeft A."/>
            <person name="Fritzc C."/>
            <person name="Holzer E."/>
            <person name="Moestl D."/>
            <person name="Hilbert H."/>
            <person name="Borzym K."/>
            <person name="Langer I."/>
            <person name="Beck A."/>
            <person name="Lehrach H."/>
            <person name="Reinhardt R."/>
            <person name="Pohl T.M."/>
            <person name="Eger P."/>
            <person name="Zimmermann W."/>
            <person name="Wedler H."/>
            <person name="Wambutt R."/>
            <person name="Purnelle B."/>
            <person name="Goffeau A."/>
            <person name="Cadieu E."/>
            <person name="Dreano S."/>
            <person name="Gloux S."/>
            <person name="Lelaure V."/>
            <person name="Mottier S."/>
            <person name="Galibert F."/>
            <person name="Aves S.J."/>
            <person name="Xiang Z."/>
            <person name="Hunt C."/>
            <person name="Moore K."/>
            <person name="Hurst S.M."/>
            <person name="Lucas M."/>
            <person name="Rochet M."/>
            <person name="Gaillardin C."/>
            <person name="Tallada V.A."/>
            <person name="Garzon A."/>
            <person name="Thode G."/>
            <person name="Daga R.R."/>
            <person name="Cruzado L."/>
            <person name="Jimenez J."/>
            <person name="Sanchez M."/>
            <person name="del Rey F."/>
            <person name="Benito J."/>
            <person name="Dominguez A."/>
            <person name="Revuelta J.L."/>
            <person name="Moreno S."/>
            <person name="Armstrong J."/>
            <person name="Forsburg S.L."/>
            <person name="Cerutti L."/>
            <person name="Lowe T."/>
            <person name="McCombie W.R."/>
            <person name="Paulsen I."/>
            <person name="Potashkin J."/>
            <person name="Shpakovski G.V."/>
            <person name="Ussery D."/>
            <person name="Barrell B.G."/>
            <person name="Nurse P."/>
        </authorList>
    </citation>
    <scope>NUCLEOTIDE SEQUENCE [LARGE SCALE GENOMIC DNA]</scope>
    <source>
        <strain>972 / ATCC 24843</strain>
    </source>
</reference>
<reference key="2">
    <citation type="journal article" date="2006" name="Nat. Biotechnol.">
        <title>ORFeome cloning and global analysis of protein localization in the fission yeast Schizosaccharomyces pombe.</title>
        <authorList>
            <person name="Matsuyama A."/>
            <person name="Arai R."/>
            <person name="Yashiroda Y."/>
            <person name="Shirai A."/>
            <person name="Kamata A."/>
            <person name="Sekido S."/>
            <person name="Kobayashi Y."/>
            <person name="Hashimoto A."/>
            <person name="Hamamoto M."/>
            <person name="Hiraoka Y."/>
            <person name="Horinouchi S."/>
            <person name="Yoshida M."/>
        </authorList>
    </citation>
    <scope>SUBCELLULAR LOCATION [LARGE SCALE ANALYSIS]</scope>
</reference>
<evidence type="ECO:0000255" key="1">
    <source>
        <dbReference type="PROSITE-ProRule" id="PRU00227"/>
    </source>
</evidence>
<evidence type="ECO:0000269" key="2">
    <source>
    </source>
</evidence>
<name>YF54_SCHPO</name>
<protein>
    <recommendedName>
        <fullName>Uncharacterized transcriptional regulatory protein C3C7.04</fullName>
    </recommendedName>
</protein>
<sequence length="783" mass="87958">MSHEFSPENTAVLFEAMKQEQHNRRRRVPMERRRRVVLACFNCKARKVRCDGANPCKACASNNLECTYPVKDEKEMDYSKDYFIDLSKRYKCLEYIVERLCSTKVSTYTTPSLIEVCNRISNQKSLLSSDVFSLNSESTNSQRDVDTLTQGALVCSQIQQDPTVVAEDTNNGINADASDQSVDEIMKLIGKIKVDSNGESRYIGASAGEAFVDSVQSELLVDPSFSELSAYSHTHHSYPPNEHDVNAVQKALSLLPPPEVSDFLIKSFYGHVQANFFFFHETLLRYRLNLIMSFQNPSVDPGFLCLLMMIFALGSMFAHMEIRSASNPFDNPGKQFFDTARLLLPQVIQQCKPSLVQASILMGLYLQSTLSQKSSYTYFGLSLSAAVANGLHRSCENPNIDPKTKELRNRLWWSVYTMDRLISIATGRPLSIADSECDAALPTVVPELEIEGSASNVHNIISMSKIAKIMGKTMEQLYGTVNYKKNPINIIESLRADLEEWKRSLPPFQILENLDAEDPLFRANVHLHMTYDQAIIIMSRPVLLHKMKNAKNSPRVDRINEDCILAARHLISLVHLLQNHSQLSCYSFFDYNYTFSSALVVLLHCVTEPCEEDDIAMQYAYSALDYMAEGNEAAKNCARVIRLFDAHLKGARSDGNGNTSQSGFMAWQRWIAEVSAKDEPEKLMSPYNKSIGGGRNSNSLTPNANLGADVSFFPTDDTSFLLDHSKLDDDLEKFASTLDPIKTTPDLANDSSLLNWANTDQGMDIEGSWLGNMHPTWLDYVCP</sequence>
<keyword id="KW-0963">Cytoplasm</keyword>
<keyword id="KW-0238">DNA-binding</keyword>
<keyword id="KW-0479">Metal-binding</keyword>
<keyword id="KW-0539">Nucleus</keyword>
<keyword id="KW-1185">Reference proteome</keyword>
<keyword id="KW-0804">Transcription</keyword>
<keyword id="KW-0805">Transcription regulation</keyword>
<keyword id="KW-0862">Zinc</keyword>
<accession>O14130</accession>
<gene>
    <name type="ORF">SPAC3C7.04</name>
</gene>
<comment type="subcellular location">
    <subcellularLocation>
        <location evidence="2">Cytoplasm</location>
    </subcellularLocation>
    <subcellularLocation>
        <location evidence="1">Nucleus</location>
    </subcellularLocation>
</comment>
<dbReference type="EMBL" id="CU329670">
    <property type="protein sequence ID" value="CAB16735.1"/>
    <property type="molecule type" value="Genomic_DNA"/>
</dbReference>
<dbReference type="PIR" id="T38690">
    <property type="entry name" value="T38690"/>
</dbReference>
<dbReference type="RefSeq" id="NP_593605.1">
    <property type="nucleotide sequence ID" value="NM_001019036.2"/>
</dbReference>
<dbReference type="SMR" id="O14130"/>
<dbReference type="BioGRID" id="280101">
    <property type="interactions" value="8"/>
</dbReference>
<dbReference type="FunCoup" id="O14130">
    <property type="interactions" value="2"/>
</dbReference>
<dbReference type="STRING" id="284812.O14130"/>
<dbReference type="iPTMnet" id="O14130"/>
<dbReference type="PaxDb" id="4896-SPAC3C7.04.1"/>
<dbReference type="EnsemblFungi" id="SPAC3C7.04.1">
    <property type="protein sequence ID" value="SPAC3C7.04.1:pep"/>
    <property type="gene ID" value="SPAC3C7.04"/>
</dbReference>
<dbReference type="KEGG" id="spo:2543687"/>
<dbReference type="PomBase" id="SPAC3C7.04"/>
<dbReference type="VEuPathDB" id="FungiDB:SPAC3C7.04"/>
<dbReference type="eggNOG" id="ENOG502S0WX">
    <property type="taxonomic scope" value="Eukaryota"/>
</dbReference>
<dbReference type="HOGENOM" id="CLU_360982_0_0_1"/>
<dbReference type="InParanoid" id="O14130"/>
<dbReference type="OMA" id="FAHMEIR"/>
<dbReference type="PhylomeDB" id="O14130"/>
<dbReference type="PRO" id="PR:O14130"/>
<dbReference type="Proteomes" id="UP000002485">
    <property type="component" value="Chromosome I"/>
</dbReference>
<dbReference type="GO" id="GO:0005737">
    <property type="term" value="C:cytoplasm"/>
    <property type="evidence" value="ECO:0007005"/>
    <property type="project" value="PomBase"/>
</dbReference>
<dbReference type="GO" id="GO:0005634">
    <property type="term" value="C:nucleus"/>
    <property type="evidence" value="ECO:0000318"/>
    <property type="project" value="GO_Central"/>
</dbReference>
<dbReference type="GO" id="GO:0000981">
    <property type="term" value="F:DNA-binding transcription factor activity, RNA polymerase II-specific"/>
    <property type="evidence" value="ECO:0000318"/>
    <property type="project" value="GO_Central"/>
</dbReference>
<dbReference type="GO" id="GO:0000978">
    <property type="term" value="F:RNA polymerase II cis-regulatory region sequence-specific DNA binding"/>
    <property type="evidence" value="ECO:0000255"/>
    <property type="project" value="PomBase"/>
</dbReference>
<dbReference type="GO" id="GO:0043565">
    <property type="term" value="F:sequence-specific DNA binding"/>
    <property type="evidence" value="ECO:0000318"/>
    <property type="project" value="GO_Central"/>
</dbReference>
<dbReference type="GO" id="GO:0008270">
    <property type="term" value="F:zinc ion binding"/>
    <property type="evidence" value="ECO:0000255"/>
    <property type="project" value="PomBase"/>
</dbReference>
<dbReference type="GO" id="GO:0006351">
    <property type="term" value="P:DNA-templated transcription"/>
    <property type="evidence" value="ECO:0007669"/>
    <property type="project" value="InterPro"/>
</dbReference>
<dbReference type="GO" id="GO:0045944">
    <property type="term" value="P:positive regulation of transcription by RNA polymerase II"/>
    <property type="evidence" value="ECO:0000318"/>
    <property type="project" value="GO_Central"/>
</dbReference>
<dbReference type="CDD" id="cd12148">
    <property type="entry name" value="fungal_TF_MHR"/>
    <property type="match status" value="1"/>
</dbReference>
<dbReference type="CDD" id="cd00067">
    <property type="entry name" value="GAL4"/>
    <property type="match status" value="1"/>
</dbReference>
<dbReference type="FunFam" id="4.10.240.10:FF:000028">
    <property type="entry name" value="Uncharacterized transcriptional regulatory protein C1773.12"/>
    <property type="match status" value="1"/>
</dbReference>
<dbReference type="Gene3D" id="4.10.240.10">
    <property type="entry name" value="Zn(2)-C6 fungal-type DNA-binding domain"/>
    <property type="match status" value="1"/>
</dbReference>
<dbReference type="InterPro" id="IPR051127">
    <property type="entry name" value="Fungal_SecMet_Regulators"/>
</dbReference>
<dbReference type="InterPro" id="IPR007219">
    <property type="entry name" value="Transcription_factor_dom_fun"/>
</dbReference>
<dbReference type="InterPro" id="IPR036864">
    <property type="entry name" value="Zn2-C6_fun-type_DNA-bd_sf"/>
</dbReference>
<dbReference type="InterPro" id="IPR001138">
    <property type="entry name" value="Zn2Cys6_DnaBD"/>
</dbReference>
<dbReference type="PANTHER" id="PTHR47424:SF6">
    <property type="entry name" value="PROLINE UTILIZATION TRANS-ACTIVATOR"/>
    <property type="match status" value="1"/>
</dbReference>
<dbReference type="PANTHER" id="PTHR47424">
    <property type="entry name" value="REGULATORY PROTEIN GAL4"/>
    <property type="match status" value="1"/>
</dbReference>
<dbReference type="Pfam" id="PF04082">
    <property type="entry name" value="Fungal_trans"/>
    <property type="match status" value="1"/>
</dbReference>
<dbReference type="Pfam" id="PF00172">
    <property type="entry name" value="Zn_clus"/>
    <property type="match status" value="1"/>
</dbReference>
<dbReference type="SMART" id="SM00906">
    <property type="entry name" value="Fungal_trans"/>
    <property type="match status" value="1"/>
</dbReference>
<dbReference type="SMART" id="SM00066">
    <property type="entry name" value="GAL4"/>
    <property type="match status" value="1"/>
</dbReference>
<dbReference type="SUPFAM" id="SSF57701">
    <property type="entry name" value="Zn2/Cys6 DNA-binding domain"/>
    <property type="match status" value="1"/>
</dbReference>
<dbReference type="PROSITE" id="PS00463">
    <property type="entry name" value="ZN2_CY6_FUNGAL_1"/>
    <property type="match status" value="1"/>
</dbReference>
<dbReference type="PROSITE" id="PS50048">
    <property type="entry name" value="ZN2_CY6_FUNGAL_2"/>
    <property type="match status" value="1"/>
</dbReference>
<feature type="chain" id="PRO_0000310380" description="Uncharacterized transcriptional regulatory protein C3C7.04">
    <location>
        <begin position="1"/>
        <end position="783"/>
    </location>
</feature>
<feature type="DNA-binding region" description="Zn(2)-C6 fungal-type" evidence="1">
    <location>
        <begin position="40"/>
        <end position="66"/>
    </location>
</feature>
<organism>
    <name type="scientific">Schizosaccharomyces pombe (strain 972 / ATCC 24843)</name>
    <name type="common">Fission yeast</name>
    <dbReference type="NCBI Taxonomy" id="284812"/>
    <lineage>
        <taxon>Eukaryota</taxon>
        <taxon>Fungi</taxon>
        <taxon>Dikarya</taxon>
        <taxon>Ascomycota</taxon>
        <taxon>Taphrinomycotina</taxon>
        <taxon>Schizosaccharomycetes</taxon>
        <taxon>Schizosaccharomycetales</taxon>
        <taxon>Schizosaccharomycetaceae</taxon>
        <taxon>Schizosaccharomyces</taxon>
    </lineage>
</organism>